<proteinExistence type="evidence at protein level"/>
<feature type="chain" id="PRO_0000348583" description="Heme transporter hrg-1">
    <location>
        <begin position="1"/>
        <end position="194"/>
    </location>
</feature>
<feature type="transmembrane region" description="Helical" evidence="1">
    <location>
        <begin position="45"/>
        <end position="65"/>
    </location>
</feature>
<feature type="transmembrane region" description="Helical" evidence="1">
    <location>
        <begin position="71"/>
        <end position="91"/>
    </location>
</feature>
<feature type="transmembrane region" description="Helical" evidence="1">
    <location>
        <begin position="113"/>
        <end position="133"/>
    </location>
</feature>
<feature type="transmembrane region" description="Helical" evidence="1">
    <location>
        <begin position="143"/>
        <end position="163"/>
    </location>
</feature>
<feature type="short sequence motif" description="Di-leucine motif">
    <location>
        <begin position="182"/>
        <end position="183"/>
    </location>
</feature>
<protein>
    <recommendedName>
        <fullName>Heme transporter hrg-1</fullName>
    </recommendedName>
    <alternativeName>
        <fullName>Heme-responsive gene 1 protein</fullName>
        <shortName>CeHRG-1</shortName>
    </alternativeName>
</protein>
<accession>Q21642</accession>
<gene>
    <name type="primary">hrg-1</name>
    <name type="ORF">R02E12.6</name>
</gene>
<organism>
    <name type="scientific">Caenorhabditis elegans</name>
    <dbReference type="NCBI Taxonomy" id="6239"/>
    <lineage>
        <taxon>Eukaryota</taxon>
        <taxon>Metazoa</taxon>
        <taxon>Ecdysozoa</taxon>
        <taxon>Nematoda</taxon>
        <taxon>Chromadorea</taxon>
        <taxon>Rhabditida</taxon>
        <taxon>Rhabditina</taxon>
        <taxon>Rhabditomorpha</taxon>
        <taxon>Rhabditoidea</taxon>
        <taxon>Rhabditidae</taxon>
        <taxon>Peloderinae</taxon>
        <taxon>Caenorhabditis</taxon>
    </lineage>
</organism>
<reference key="1">
    <citation type="journal article" date="1998" name="Science">
        <title>Genome sequence of the nematode C. elegans: a platform for investigating biology.</title>
        <authorList>
            <consortium name="The C. elegans sequencing consortium"/>
        </authorList>
    </citation>
    <scope>NUCLEOTIDE SEQUENCE [LARGE SCALE GENOMIC DNA]</scope>
    <source>
        <strain>Bristol N2</strain>
    </source>
</reference>
<reference key="2">
    <citation type="journal article" date="2008" name="Nature">
        <title>Haem homeostasis is regulated by the conserved and concerted functions of HRG-1 proteins.</title>
        <authorList>
            <person name="Rajagopal A."/>
            <person name="Rao A.U."/>
            <person name="Amigo J."/>
            <person name="Tian M."/>
            <person name="Upadhyay S.K."/>
            <person name="Hall C."/>
            <person name="Uhm S."/>
            <person name="Mathew M.K."/>
            <person name="Fleming M.D."/>
            <person name="Paw B.H."/>
            <person name="Krause M."/>
            <person name="Hamza I."/>
        </authorList>
    </citation>
    <scope>FUNCTION</scope>
    <scope>SUBCELLULAR LOCATION</scope>
    <scope>HEME-BINDING</scope>
    <scope>TISSUE SPECIFICITY</scope>
    <scope>INDUCTION</scope>
</reference>
<dbReference type="EMBL" id="FO080560">
    <property type="protein sequence ID" value="CCD64658.1"/>
    <property type="molecule type" value="Genomic_DNA"/>
</dbReference>
<dbReference type="PIR" id="T16649">
    <property type="entry name" value="T16649"/>
</dbReference>
<dbReference type="RefSeq" id="NP_001370439.1">
    <property type="nucleotide sequence ID" value="NM_001383555.2"/>
</dbReference>
<dbReference type="RefSeq" id="NP_508690.2">
    <property type="nucleotide sequence ID" value="NM_076289.8"/>
</dbReference>
<dbReference type="FunCoup" id="Q21642">
    <property type="interactions" value="319"/>
</dbReference>
<dbReference type="STRING" id="6239.R02E12.6.2"/>
<dbReference type="TCDB" id="2.A.110.1.2">
    <property type="family name" value="the heme transporter, heme-responsive gene protein (hrg) family"/>
</dbReference>
<dbReference type="PaxDb" id="6239-R02E12.6.1"/>
<dbReference type="PeptideAtlas" id="Q21642"/>
<dbReference type="EnsemblMetazoa" id="R02E12.6.1">
    <property type="protein sequence ID" value="R02E12.6.1"/>
    <property type="gene ID" value="WBGene00019830"/>
</dbReference>
<dbReference type="EnsemblMetazoa" id="R02E12.6.2">
    <property type="protein sequence ID" value="R02E12.6.2"/>
    <property type="gene ID" value="WBGene00019830"/>
</dbReference>
<dbReference type="EnsemblMetazoa" id="R02E12.6.3">
    <property type="protein sequence ID" value="R02E12.6.3"/>
    <property type="gene ID" value="WBGene00019830"/>
</dbReference>
<dbReference type="GeneID" id="180684"/>
<dbReference type="UCSC" id="R02E12.6.3">
    <property type="organism name" value="c. elegans"/>
</dbReference>
<dbReference type="AGR" id="WB:WBGene00019830"/>
<dbReference type="WormBase" id="R02E12.6">
    <property type="protein sequence ID" value="CE30099"/>
    <property type="gene ID" value="WBGene00019830"/>
    <property type="gene designation" value="hrg-1"/>
</dbReference>
<dbReference type="eggNOG" id="ENOG502SEBR">
    <property type="taxonomic scope" value="Eukaryota"/>
</dbReference>
<dbReference type="GeneTree" id="ENSGT00390000002307"/>
<dbReference type="HOGENOM" id="CLU_1572023_0_0_1"/>
<dbReference type="InParanoid" id="Q21642"/>
<dbReference type="OMA" id="AVWFFMT"/>
<dbReference type="OrthoDB" id="5954402at2759"/>
<dbReference type="PhylomeDB" id="Q21642"/>
<dbReference type="PRO" id="PR:Q21642"/>
<dbReference type="Proteomes" id="UP000001940">
    <property type="component" value="Chromosome X"/>
</dbReference>
<dbReference type="Bgee" id="WBGene00019830">
    <property type="expression patterns" value="Expressed in larva and 3 other cell types or tissues"/>
</dbReference>
<dbReference type="GO" id="GO:0010008">
    <property type="term" value="C:endosome membrane"/>
    <property type="evidence" value="ECO:0000314"/>
    <property type="project" value="WormBase"/>
</dbReference>
<dbReference type="GO" id="GO:0005765">
    <property type="term" value="C:lysosomal membrane"/>
    <property type="evidence" value="ECO:0000314"/>
    <property type="project" value="WormBase"/>
</dbReference>
<dbReference type="GO" id="GO:0005886">
    <property type="term" value="C:plasma membrane"/>
    <property type="evidence" value="ECO:0000318"/>
    <property type="project" value="GO_Central"/>
</dbReference>
<dbReference type="GO" id="GO:0020037">
    <property type="term" value="F:heme binding"/>
    <property type="evidence" value="ECO:0000314"/>
    <property type="project" value="WormBase"/>
</dbReference>
<dbReference type="GO" id="GO:0015232">
    <property type="term" value="F:heme transmembrane transporter activity"/>
    <property type="evidence" value="ECO:0000314"/>
    <property type="project" value="WormBase"/>
</dbReference>
<dbReference type="GO" id="GO:0015886">
    <property type="term" value="P:heme transport"/>
    <property type="evidence" value="ECO:0000314"/>
    <property type="project" value="WormBase"/>
</dbReference>
<dbReference type="InterPro" id="IPR026218">
    <property type="entry name" value="HRG"/>
</dbReference>
<dbReference type="PANTHER" id="PTHR31525">
    <property type="entry name" value="HEME TRANSPORTER HRG1"/>
    <property type="match status" value="1"/>
</dbReference>
<dbReference type="PANTHER" id="PTHR31525:SF1">
    <property type="entry name" value="HEME TRANSPORTER HRG1"/>
    <property type="match status" value="1"/>
</dbReference>
<dbReference type="Pfam" id="PF16954">
    <property type="entry name" value="HRG"/>
    <property type="match status" value="1"/>
</dbReference>
<dbReference type="PRINTS" id="PR02095">
    <property type="entry name" value="TRNSPORTRHRG"/>
</dbReference>
<name>HRG1_CAEEL</name>
<sequence length="194" mass="21737">MHQIYSSDVSSITSKSSIAKAEIITMEEEQQRQSCCTWFHSLKVQIWIAWLGVSAGVMAGTVFAIQYQNWIAVTMCFISSGFATLVLHLHLAYKKTQMAGWSETRLRCLAAVGATVSFLSFIAMVFCLVVAGIEHQTLDKQGLMGANLWIAAVWFFMTSKWSALTWRFARKYRAFCEESQPLLAAAPPEYSVTI</sequence>
<comment type="function">
    <text evidence="2">Heme transporter that regulates intracellular heme availability through the endosomal or lysosomal compartment.</text>
</comment>
<comment type="subcellular location">
    <subcellularLocation>
        <location evidence="2">Endosome membrane</location>
        <topology evidence="2">Multi-pass membrane protein</topology>
    </subcellularLocation>
    <subcellularLocation>
        <location evidence="2">Lysosome membrane</location>
        <topology evidence="2">Multi-pass membrane protein</topology>
    </subcellularLocation>
</comment>
<comment type="tissue specificity">
    <text evidence="2">Specifically expressed in the intestinal cells in larvae and adults.</text>
</comment>
<comment type="induction">
    <text evidence="2">By heme deficiency.</text>
</comment>
<comment type="similarity">
    <text evidence="3">Belongs to the HRG family.</text>
</comment>
<evidence type="ECO:0000255" key="1"/>
<evidence type="ECO:0000269" key="2">
    <source>
    </source>
</evidence>
<evidence type="ECO:0000305" key="3"/>
<keyword id="KW-0967">Endosome</keyword>
<keyword id="KW-0458">Lysosome</keyword>
<keyword id="KW-0472">Membrane</keyword>
<keyword id="KW-1185">Reference proteome</keyword>
<keyword id="KW-0812">Transmembrane</keyword>
<keyword id="KW-1133">Transmembrane helix</keyword>
<keyword id="KW-0813">Transport</keyword>